<organism>
    <name type="scientific">Mycobacterium tuberculosis (strain CDC 1551 / Oshkosh)</name>
    <dbReference type="NCBI Taxonomy" id="83331"/>
    <lineage>
        <taxon>Bacteria</taxon>
        <taxon>Bacillati</taxon>
        <taxon>Actinomycetota</taxon>
        <taxon>Actinomycetes</taxon>
        <taxon>Mycobacteriales</taxon>
        <taxon>Mycobacteriaceae</taxon>
        <taxon>Mycobacterium</taxon>
        <taxon>Mycobacterium tuberculosis complex</taxon>
    </lineage>
</organism>
<keyword id="KW-1003">Cell membrane</keyword>
<keyword id="KW-0328">Glycosyltransferase</keyword>
<keyword id="KW-0472">Membrane</keyword>
<keyword id="KW-1185">Reference proteome</keyword>
<keyword id="KW-0808">Transferase</keyword>
<keyword id="KW-0812">Transmembrane</keyword>
<keyword id="KW-1133">Transmembrane helix</keyword>
<comment type="function">
    <text evidence="1">May play only a redundant role in maintaining cell wall viability and bacterial virulence.</text>
</comment>
<comment type="subcellular location">
    <subcellularLocation>
        <location evidence="3">Cell membrane</location>
        <topology evidence="3">Multi-pass membrane protein</topology>
    </subcellularLocation>
</comment>
<comment type="similarity">
    <text evidence="3">Belongs to the glycosyltransferase 2 family.</text>
</comment>
<protein>
    <recommendedName>
        <fullName>Putative glycosyltransferases</fullName>
        <ecNumber>2.4.-.-</ecNumber>
    </recommendedName>
</protein>
<proteinExistence type="inferred from homology"/>
<evidence type="ECO:0000250" key="1"/>
<evidence type="ECO:0000255" key="2"/>
<evidence type="ECO:0000305" key="3"/>
<name>GLYTR_MYCTO</name>
<reference key="1">
    <citation type="journal article" date="2002" name="J. Bacteriol.">
        <title>Whole-genome comparison of Mycobacterium tuberculosis clinical and laboratory strains.</title>
        <authorList>
            <person name="Fleischmann R.D."/>
            <person name="Alland D."/>
            <person name="Eisen J.A."/>
            <person name="Carpenter L."/>
            <person name="White O."/>
            <person name="Peterson J.D."/>
            <person name="DeBoy R.T."/>
            <person name="Dodson R.J."/>
            <person name="Gwinn M.L."/>
            <person name="Haft D.H."/>
            <person name="Hickey E.K."/>
            <person name="Kolonay J.F."/>
            <person name="Nelson W.C."/>
            <person name="Umayam L.A."/>
            <person name="Ermolaeva M.D."/>
            <person name="Salzberg S.L."/>
            <person name="Delcher A."/>
            <person name="Utterback T.R."/>
            <person name="Weidman J.F."/>
            <person name="Khouri H.M."/>
            <person name="Gill J."/>
            <person name="Mikula A."/>
            <person name="Bishai W."/>
            <person name="Jacobs W.R. Jr."/>
            <person name="Venter J.C."/>
            <person name="Fraser C.M."/>
        </authorList>
    </citation>
    <scope>NUCLEOTIDE SEQUENCE [LARGE SCALE GENOMIC DNA]</scope>
    <source>
        <strain>CDC 1551 / Oshkosh</strain>
    </source>
</reference>
<gene>
    <name type="primary">pimF</name>
    <name type="ordered locus">MT1549</name>
</gene>
<accession>P9WMX4</accession>
<accession>L0T716</accession>
<accession>P71781</accession>
<accession>Q7D8C9</accession>
<feature type="chain" id="PRO_0000427226" description="Putative glycosyltransferases">
    <location>
        <begin position="1"/>
        <end position="342"/>
    </location>
</feature>
<feature type="transmembrane region" description="Helical" evidence="2">
    <location>
        <begin position="227"/>
        <end position="247"/>
    </location>
</feature>
<feature type="transmembrane region" description="Helical" evidence="2">
    <location>
        <begin position="262"/>
        <end position="282"/>
    </location>
</feature>
<sequence>MRLSIVTTMYMSEPYVLEFYRRARAAADKITPDVEIIFVDDGSPDAALQQAVSLLDSDPCVRVIQLSRNFGHHKAMMTGLAHATGDLVFLIDSDLEEDPALLEPFYEKLISTGADVVFGCHARRPGGWLRNFGPKIHYRASALLCDPPLHENTLTVRLMTADYVRSLVQHQERELSIAGLWQITGFYQVPMSVNKAWKGTTTYTFRRKVATLVDNVTSFSNKPLVFIFYLGAAIFIISSSAAGYLIIDRIFFRALQAGWASVIVSIWMLGGVTIFCIGLVGIYVSKVFIETKQRPYTIIRRIYGSDLTTREPSSLKTAFPAAHLSNGKRVTSEPEGLATGNR</sequence>
<dbReference type="EC" id="2.4.-.-"/>
<dbReference type="EMBL" id="AE000516">
    <property type="protein sequence ID" value="AAK45815.1"/>
    <property type="molecule type" value="Genomic_DNA"/>
</dbReference>
<dbReference type="PIR" id="G70712">
    <property type="entry name" value="G70712"/>
</dbReference>
<dbReference type="RefSeq" id="WP_003407612.1">
    <property type="nucleotide sequence ID" value="NZ_KK341227.1"/>
</dbReference>
<dbReference type="SMR" id="P9WMX4"/>
<dbReference type="CAZy" id="GT2">
    <property type="family name" value="Glycosyltransferase Family 2"/>
</dbReference>
<dbReference type="KEGG" id="mtc:MT1549"/>
<dbReference type="PATRIC" id="fig|83331.31.peg.1666"/>
<dbReference type="HOGENOM" id="CLU_033536_0_1_11"/>
<dbReference type="Proteomes" id="UP000001020">
    <property type="component" value="Chromosome"/>
</dbReference>
<dbReference type="GO" id="GO:0005886">
    <property type="term" value="C:plasma membrane"/>
    <property type="evidence" value="ECO:0007669"/>
    <property type="project" value="UniProtKB-SubCell"/>
</dbReference>
<dbReference type="GO" id="GO:0016757">
    <property type="term" value="F:glycosyltransferase activity"/>
    <property type="evidence" value="ECO:0007669"/>
    <property type="project" value="UniProtKB-KW"/>
</dbReference>
<dbReference type="CDD" id="cd04187">
    <property type="entry name" value="DPM1_like_bac"/>
    <property type="match status" value="1"/>
</dbReference>
<dbReference type="Gene3D" id="3.90.550.10">
    <property type="entry name" value="Spore Coat Polysaccharide Biosynthesis Protein SpsA, Chain A"/>
    <property type="match status" value="1"/>
</dbReference>
<dbReference type="InterPro" id="IPR001173">
    <property type="entry name" value="Glyco_trans_2-like"/>
</dbReference>
<dbReference type="InterPro" id="IPR050256">
    <property type="entry name" value="Glycosyltransferase_2"/>
</dbReference>
<dbReference type="InterPro" id="IPR029044">
    <property type="entry name" value="Nucleotide-diphossugar_trans"/>
</dbReference>
<dbReference type="PANTHER" id="PTHR48090:SF1">
    <property type="entry name" value="PROPHAGE BACTOPRENOL GLUCOSYL TRANSFERASE HOMOLOG"/>
    <property type="match status" value="1"/>
</dbReference>
<dbReference type="PANTHER" id="PTHR48090">
    <property type="entry name" value="UNDECAPRENYL-PHOSPHATE 4-DEOXY-4-FORMAMIDO-L-ARABINOSE TRANSFERASE-RELATED"/>
    <property type="match status" value="1"/>
</dbReference>
<dbReference type="Pfam" id="PF00535">
    <property type="entry name" value="Glycos_transf_2"/>
    <property type="match status" value="1"/>
</dbReference>
<dbReference type="SUPFAM" id="SSF53448">
    <property type="entry name" value="Nucleotide-diphospho-sugar transferases"/>
    <property type="match status" value="1"/>
</dbReference>